<protein>
    <recommendedName>
        <fullName evidence="1">Large ribosomal subunit protein bL33</fullName>
    </recommendedName>
    <alternativeName>
        <fullName evidence="2">50S ribosomal protein L33</fullName>
    </alternativeName>
</protein>
<evidence type="ECO:0000255" key="1">
    <source>
        <dbReference type="HAMAP-Rule" id="MF_00294"/>
    </source>
</evidence>
<evidence type="ECO:0000305" key="2"/>
<gene>
    <name evidence="1" type="primary">rpmG</name>
    <name type="ordered locus">PMI3158</name>
</gene>
<sequence>MAKGIREKIKLVSSAGTGHFYTTTKNKRTMPEKLEMKKFDPVVRQHVTYKEAKIK</sequence>
<accession>B4F0X0</accession>
<reference key="1">
    <citation type="journal article" date="2008" name="J. Bacteriol.">
        <title>Complete genome sequence of uropathogenic Proteus mirabilis, a master of both adherence and motility.</title>
        <authorList>
            <person name="Pearson M.M."/>
            <person name="Sebaihia M."/>
            <person name="Churcher C."/>
            <person name="Quail M.A."/>
            <person name="Seshasayee A.S."/>
            <person name="Luscombe N.M."/>
            <person name="Abdellah Z."/>
            <person name="Arrosmith C."/>
            <person name="Atkin B."/>
            <person name="Chillingworth T."/>
            <person name="Hauser H."/>
            <person name="Jagels K."/>
            <person name="Moule S."/>
            <person name="Mungall K."/>
            <person name="Norbertczak H."/>
            <person name="Rabbinowitsch E."/>
            <person name="Walker D."/>
            <person name="Whithead S."/>
            <person name="Thomson N.R."/>
            <person name="Rather P.N."/>
            <person name="Parkhill J."/>
            <person name="Mobley H.L.T."/>
        </authorList>
    </citation>
    <scope>NUCLEOTIDE SEQUENCE [LARGE SCALE GENOMIC DNA]</scope>
    <source>
        <strain>HI4320</strain>
    </source>
</reference>
<comment type="similarity">
    <text evidence="1">Belongs to the bacterial ribosomal protein bL33 family.</text>
</comment>
<proteinExistence type="inferred from homology"/>
<feature type="chain" id="PRO_1000115154" description="Large ribosomal subunit protein bL33">
    <location>
        <begin position="1"/>
        <end position="55"/>
    </location>
</feature>
<dbReference type="EMBL" id="AM942759">
    <property type="protein sequence ID" value="CAR46204.1"/>
    <property type="molecule type" value="Genomic_DNA"/>
</dbReference>
<dbReference type="RefSeq" id="WP_004246483.1">
    <property type="nucleotide sequence ID" value="NC_010554.1"/>
</dbReference>
<dbReference type="SMR" id="B4F0X0"/>
<dbReference type="EnsemblBacteria" id="CAR46204">
    <property type="protein sequence ID" value="CAR46204"/>
    <property type="gene ID" value="PMI3158"/>
</dbReference>
<dbReference type="GeneID" id="6801686"/>
<dbReference type="KEGG" id="pmr:PMI3158"/>
<dbReference type="eggNOG" id="COG0267">
    <property type="taxonomic scope" value="Bacteria"/>
</dbReference>
<dbReference type="HOGENOM" id="CLU_190949_1_1_6"/>
<dbReference type="Proteomes" id="UP000008319">
    <property type="component" value="Chromosome"/>
</dbReference>
<dbReference type="GO" id="GO:0022625">
    <property type="term" value="C:cytosolic large ribosomal subunit"/>
    <property type="evidence" value="ECO:0007669"/>
    <property type="project" value="TreeGrafter"/>
</dbReference>
<dbReference type="GO" id="GO:0003735">
    <property type="term" value="F:structural constituent of ribosome"/>
    <property type="evidence" value="ECO:0007669"/>
    <property type="project" value="InterPro"/>
</dbReference>
<dbReference type="GO" id="GO:0006412">
    <property type="term" value="P:translation"/>
    <property type="evidence" value="ECO:0007669"/>
    <property type="project" value="UniProtKB-UniRule"/>
</dbReference>
<dbReference type="FunFam" id="2.20.28.120:FF:000001">
    <property type="entry name" value="50S ribosomal protein L33"/>
    <property type="match status" value="1"/>
</dbReference>
<dbReference type="Gene3D" id="2.20.28.120">
    <property type="entry name" value="Ribosomal protein L33"/>
    <property type="match status" value="1"/>
</dbReference>
<dbReference type="HAMAP" id="MF_00294">
    <property type="entry name" value="Ribosomal_bL33"/>
    <property type="match status" value="1"/>
</dbReference>
<dbReference type="InterPro" id="IPR001705">
    <property type="entry name" value="Ribosomal_bL33"/>
</dbReference>
<dbReference type="InterPro" id="IPR018264">
    <property type="entry name" value="Ribosomal_bL33_CS"/>
</dbReference>
<dbReference type="InterPro" id="IPR038584">
    <property type="entry name" value="Ribosomal_bL33_sf"/>
</dbReference>
<dbReference type="InterPro" id="IPR011332">
    <property type="entry name" value="Ribosomal_zn-bd"/>
</dbReference>
<dbReference type="NCBIfam" id="NF001860">
    <property type="entry name" value="PRK00595.1"/>
    <property type="match status" value="1"/>
</dbReference>
<dbReference type="NCBIfam" id="TIGR01023">
    <property type="entry name" value="rpmG_bact"/>
    <property type="match status" value="1"/>
</dbReference>
<dbReference type="PANTHER" id="PTHR15238">
    <property type="entry name" value="54S RIBOSOMAL PROTEIN L39, MITOCHONDRIAL"/>
    <property type="match status" value="1"/>
</dbReference>
<dbReference type="PANTHER" id="PTHR15238:SF1">
    <property type="entry name" value="LARGE RIBOSOMAL SUBUNIT PROTEIN BL33M"/>
    <property type="match status" value="1"/>
</dbReference>
<dbReference type="Pfam" id="PF00471">
    <property type="entry name" value="Ribosomal_L33"/>
    <property type="match status" value="1"/>
</dbReference>
<dbReference type="SUPFAM" id="SSF57829">
    <property type="entry name" value="Zn-binding ribosomal proteins"/>
    <property type="match status" value="1"/>
</dbReference>
<dbReference type="PROSITE" id="PS00582">
    <property type="entry name" value="RIBOSOMAL_L33"/>
    <property type="match status" value="1"/>
</dbReference>
<keyword id="KW-1185">Reference proteome</keyword>
<keyword id="KW-0687">Ribonucleoprotein</keyword>
<keyword id="KW-0689">Ribosomal protein</keyword>
<organism>
    <name type="scientific">Proteus mirabilis (strain HI4320)</name>
    <dbReference type="NCBI Taxonomy" id="529507"/>
    <lineage>
        <taxon>Bacteria</taxon>
        <taxon>Pseudomonadati</taxon>
        <taxon>Pseudomonadota</taxon>
        <taxon>Gammaproteobacteria</taxon>
        <taxon>Enterobacterales</taxon>
        <taxon>Morganellaceae</taxon>
        <taxon>Proteus</taxon>
    </lineage>
</organism>
<name>RL33_PROMH</name>